<sequence length="262" mass="28781">KTSTRTRCAFEVAARDQGAGATYLEPSASQIGHKESIKDTARVLGRMYDAIEYRGFGQEIVEELAKYAGVPVFNGLTNEFHPTQMLADALTMREHSSKPLNQTAFAYVGDARYNMGNSLLILGAKLGMDVRIGAPESLWPSEGIIAAAHAAAKETGAKITLTENAHEAVKGVGFIHTDVWVSMGEPKEVWQERIDLLKDYRVTPELMAASGNPQVKFMHCLPAFHNRETKVGEWIYETFGLNGVEVTEEVFESPASIVFDQA</sequence>
<accession>Q01327</accession>
<accession>P95397</accession>
<accession>P95398</accession>
<name>OTC_NEIPO</name>
<dbReference type="EC" id="2.1.3.3"/>
<dbReference type="EMBL" id="X64870">
    <property type="protein sequence ID" value="CAA46082.1"/>
    <property type="molecule type" value="Genomic_DNA"/>
</dbReference>
<dbReference type="EMBL" id="Y10878">
    <property type="protein sequence ID" value="CAA71828.1"/>
    <property type="molecule type" value="Genomic_DNA"/>
</dbReference>
<dbReference type="EMBL" id="Y10879">
    <property type="protein sequence ID" value="CAA71829.1"/>
    <property type="molecule type" value="Genomic_DNA"/>
</dbReference>
<dbReference type="EMBL" id="Y10880">
    <property type="protein sequence ID" value="CAA71830.1"/>
    <property type="molecule type" value="Genomic_DNA"/>
</dbReference>
<dbReference type="EMBL" id="Y10881">
    <property type="protein sequence ID" value="CAA71831.1"/>
    <property type="molecule type" value="Genomic_DNA"/>
</dbReference>
<dbReference type="PIR" id="S24749">
    <property type="entry name" value="S24749"/>
</dbReference>
<dbReference type="SMR" id="Q01327"/>
<dbReference type="UniPathway" id="UPA00068">
    <property type="reaction ID" value="UER00112"/>
</dbReference>
<dbReference type="GO" id="GO:0005737">
    <property type="term" value="C:cytoplasm"/>
    <property type="evidence" value="ECO:0007669"/>
    <property type="project" value="UniProtKB-SubCell"/>
</dbReference>
<dbReference type="GO" id="GO:0016597">
    <property type="term" value="F:amino acid binding"/>
    <property type="evidence" value="ECO:0007669"/>
    <property type="project" value="InterPro"/>
</dbReference>
<dbReference type="GO" id="GO:0004585">
    <property type="term" value="F:ornithine carbamoyltransferase activity"/>
    <property type="evidence" value="ECO:0007669"/>
    <property type="project" value="UniProtKB-EC"/>
</dbReference>
<dbReference type="GO" id="GO:0042450">
    <property type="term" value="P:arginine biosynthetic process via ornithine"/>
    <property type="evidence" value="ECO:0007669"/>
    <property type="project" value="TreeGrafter"/>
</dbReference>
<dbReference type="GO" id="GO:0019240">
    <property type="term" value="P:citrulline biosynthetic process"/>
    <property type="evidence" value="ECO:0007669"/>
    <property type="project" value="TreeGrafter"/>
</dbReference>
<dbReference type="GO" id="GO:0006526">
    <property type="term" value="P:L-arginine biosynthetic process"/>
    <property type="evidence" value="ECO:0007669"/>
    <property type="project" value="UniProtKB-UniPathway"/>
</dbReference>
<dbReference type="FunFam" id="3.40.50.1370:FF:000004">
    <property type="entry name" value="Ornithine carbamoyltransferase"/>
    <property type="match status" value="1"/>
</dbReference>
<dbReference type="Gene3D" id="3.40.50.1370">
    <property type="entry name" value="Aspartate/ornithine carbamoyltransferase"/>
    <property type="match status" value="2"/>
</dbReference>
<dbReference type="InterPro" id="IPR006132">
    <property type="entry name" value="Asp/Orn_carbamoyltranf_P-bd"/>
</dbReference>
<dbReference type="InterPro" id="IPR006130">
    <property type="entry name" value="Asp/Orn_carbamoylTrfase"/>
</dbReference>
<dbReference type="InterPro" id="IPR036901">
    <property type="entry name" value="Asp/Orn_carbamoylTrfase_sf"/>
</dbReference>
<dbReference type="InterPro" id="IPR006131">
    <property type="entry name" value="Asp_carbamoyltransf_Asp/Orn-bd"/>
</dbReference>
<dbReference type="InterPro" id="IPR002292">
    <property type="entry name" value="Orn/put_carbamltrans"/>
</dbReference>
<dbReference type="NCBIfam" id="TIGR00658">
    <property type="entry name" value="orni_carb_tr"/>
    <property type="match status" value="1"/>
</dbReference>
<dbReference type="PANTHER" id="PTHR45753:SF2">
    <property type="entry name" value="ORNITHINE CARBAMOYLTRANSFERASE"/>
    <property type="match status" value="1"/>
</dbReference>
<dbReference type="PANTHER" id="PTHR45753">
    <property type="entry name" value="ORNITHINE CARBAMOYLTRANSFERASE, MITOCHONDRIAL"/>
    <property type="match status" value="1"/>
</dbReference>
<dbReference type="Pfam" id="PF00185">
    <property type="entry name" value="OTCace"/>
    <property type="match status" value="1"/>
</dbReference>
<dbReference type="Pfam" id="PF02729">
    <property type="entry name" value="OTCace_N"/>
    <property type="match status" value="1"/>
</dbReference>
<dbReference type="PRINTS" id="PR00100">
    <property type="entry name" value="AOTCASE"/>
</dbReference>
<dbReference type="PRINTS" id="PR00102">
    <property type="entry name" value="OTCASE"/>
</dbReference>
<dbReference type="SUPFAM" id="SSF53671">
    <property type="entry name" value="Aspartate/ornithine carbamoyltransferase"/>
    <property type="match status" value="1"/>
</dbReference>
<keyword id="KW-0028">Amino-acid biosynthesis</keyword>
<keyword id="KW-0055">Arginine biosynthesis</keyword>
<keyword id="KW-0963">Cytoplasm</keyword>
<keyword id="KW-0808">Transferase</keyword>
<proteinExistence type="inferred from homology"/>
<protein>
    <recommendedName>
        <fullName>Ornithine carbamoyltransferase</fullName>
        <shortName>OTCase</shortName>
        <ecNumber>2.1.3.3</ecNumber>
    </recommendedName>
</protein>
<organism>
    <name type="scientific">Neisseria polysaccharea</name>
    <dbReference type="NCBI Taxonomy" id="489"/>
    <lineage>
        <taxon>Bacteria</taxon>
        <taxon>Pseudomonadati</taxon>
        <taxon>Pseudomonadota</taxon>
        <taxon>Betaproteobacteria</taxon>
        <taxon>Neisseriales</taxon>
        <taxon>Neisseriaceae</taxon>
        <taxon>Neisseria</taxon>
    </lineage>
</organism>
<feature type="chain" id="PRO_0000112970" description="Ornithine carbamoyltransferase">
    <location>
        <begin position="1" status="less than"/>
        <end position="262" status="greater than"/>
    </location>
</feature>
<feature type="binding site" evidence="1">
    <location>
        <begin position="3"/>
        <end position="7"/>
    </location>
    <ligand>
        <name>carbamoyl phosphate</name>
        <dbReference type="ChEBI" id="CHEBI:58228"/>
    </ligand>
</feature>
<feature type="binding site" evidence="1">
    <location>
        <position position="30"/>
    </location>
    <ligand>
        <name>carbamoyl phosphate</name>
        <dbReference type="ChEBI" id="CHEBI:58228"/>
    </ligand>
</feature>
<feature type="binding site" evidence="1">
    <location>
        <position position="54"/>
    </location>
    <ligand>
        <name>carbamoyl phosphate</name>
        <dbReference type="ChEBI" id="CHEBI:58228"/>
    </ligand>
</feature>
<feature type="binding site" evidence="1">
    <location>
        <begin position="81"/>
        <end position="84"/>
    </location>
    <ligand>
        <name>carbamoyl phosphate</name>
        <dbReference type="ChEBI" id="CHEBI:58228"/>
    </ligand>
</feature>
<feature type="binding site" evidence="1">
    <location>
        <position position="114"/>
    </location>
    <ligand>
        <name>L-ornithine</name>
        <dbReference type="ChEBI" id="CHEBI:46911"/>
    </ligand>
</feature>
<feature type="binding site" evidence="1">
    <location>
        <position position="178"/>
    </location>
    <ligand>
        <name>L-ornithine</name>
        <dbReference type="ChEBI" id="CHEBI:46911"/>
    </ligand>
</feature>
<feature type="binding site" evidence="1">
    <location>
        <begin position="182"/>
        <end position="183"/>
    </location>
    <ligand>
        <name>L-ornithine</name>
        <dbReference type="ChEBI" id="CHEBI:46911"/>
    </ligand>
</feature>
<feature type="binding site" evidence="1">
    <location>
        <begin position="219"/>
        <end position="222"/>
    </location>
    <ligand>
        <name>carbamoyl phosphate</name>
        <dbReference type="ChEBI" id="CHEBI:58228"/>
    </ligand>
</feature>
<feature type="binding site" evidence="1">
    <location>
        <position position="247"/>
    </location>
    <ligand>
        <name>carbamoyl phosphate</name>
        <dbReference type="ChEBI" id="CHEBI:58228"/>
    </ligand>
</feature>
<feature type="site" description="Important for structural integrity" evidence="1">
    <location>
        <position position="94"/>
    </location>
</feature>
<feature type="sequence variant" description="In strain: INS MA3008.">
    <original>A</original>
    <variation>V</variation>
    <location>
        <position position="21"/>
    </location>
</feature>
<feature type="sequence variant" description="In strain: CCUG 24846.">
    <original>V</original>
    <variation>I</variation>
    <location>
        <position position="61"/>
    </location>
</feature>
<feature type="sequence variant" description="In strain: CCUG 24846.">
    <original>E</original>
    <variation>Q</variation>
    <location>
        <position position="136"/>
    </location>
</feature>
<feature type="sequence variant" description="In strain: CCUG 24846 and INS MA3008.">
    <original>A</original>
    <variation>T</variation>
    <location>
        <position position="146"/>
    </location>
</feature>
<feature type="sequence variant" description="In strain: CCUG 24846 and INS MA3008.">
    <original>A</original>
    <variation>V</variation>
    <location>
        <position position="151"/>
    </location>
</feature>
<feature type="sequence variant" description="In strain: CCUG 24846 and INS MA3008.">
    <original>GVG</original>
    <variation>NVD</variation>
    <location>
        <begin position="171"/>
        <end position="173"/>
    </location>
</feature>
<feature type="non-terminal residue">
    <location>
        <position position="1"/>
    </location>
</feature>
<feature type="non-terminal residue">
    <location>
        <position position="262"/>
    </location>
</feature>
<gene>
    <name type="primary">argF</name>
</gene>
<reference key="1">
    <citation type="journal article" date="1992" name="Mol. Microbiol.">
        <title>Sequence diversity within the argF, fbp and recA genes of natural isolates of Neisseria meningitidis: interspecies recombination within the argF gene.</title>
        <authorList>
            <person name="Zhou J."/>
            <person name="Spratt B.G."/>
        </authorList>
    </citation>
    <scope>NUCLEOTIDE SEQUENCE [GENOMIC DNA]</scope>
    <source>
        <strain>ATCC 43768 / DSM 22809 / CCUG 18030 / CIP 100113 / NCTC 11858 / LNP N 462</strain>
    </source>
</reference>
<reference key="2">
    <citation type="journal article" date="1999" name="Mol. Biol. Evol.">
        <title>Networks and groups within the genus Neisseria: analysis of argF, recA, rho, and 16S rRNA sequences from human Neisseria species.</title>
        <authorList>
            <person name="Smith N.H."/>
            <person name="Holmes E.C."/>
            <person name="Donovan G.M."/>
            <person name="Carpenter G.A."/>
            <person name="Spratt B.G."/>
        </authorList>
    </citation>
    <scope>NUCLEOTIDE SEQUENCE [GENOMIC DNA] OF 16-247</scope>
    <source>
        <strain>CCUG 18031</strain>
        <strain>CCUG 24845 / N6817</strain>
        <strain>CCUG 24846 / N6665</strain>
        <strain>INS MA3008</strain>
    </source>
</reference>
<evidence type="ECO:0000250" key="1"/>
<evidence type="ECO:0000305" key="2"/>
<comment type="function">
    <text evidence="1">Reversibly catalyzes the transfer of the carbamoyl group from carbamoyl phosphate (CP) to the N(epsilon) atom of ornithine (ORN) to produce L-citrulline.</text>
</comment>
<comment type="catalytic activity">
    <reaction>
        <text>carbamoyl phosphate + L-ornithine = L-citrulline + phosphate + H(+)</text>
        <dbReference type="Rhea" id="RHEA:19513"/>
        <dbReference type="ChEBI" id="CHEBI:15378"/>
        <dbReference type="ChEBI" id="CHEBI:43474"/>
        <dbReference type="ChEBI" id="CHEBI:46911"/>
        <dbReference type="ChEBI" id="CHEBI:57743"/>
        <dbReference type="ChEBI" id="CHEBI:58228"/>
        <dbReference type="EC" id="2.1.3.3"/>
    </reaction>
</comment>
<comment type="pathway">
    <text>Amino-acid biosynthesis; L-arginine biosynthesis; L-arginine from L-ornithine and carbamoyl phosphate: step 1/3.</text>
</comment>
<comment type="subcellular location">
    <subcellularLocation>
        <location evidence="1">Cytoplasm</location>
    </subcellularLocation>
</comment>
<comment type="similarity">
    <text evidence="2">Belongs to the aspartate/ornithine carbamoyltransferase superfamily. OTCase family.</text>
</comment>